<dbReference type="EC" id="2.7.7.6" evidence="1"/>
<dbReference type="EMBL" id="BX897700">
    <property type="protein sequence ID" value="CAF26282.1"/>
    <property type="molecule type" value="Genomic_DNA"/>
</dbReference>
<dbReference type="RefSeq" id="WP_011179529.1">
    <property type="nucleotide sequence ID" value="NC_005955.1"/>
</dbReference>
<dbReference type="SMR" id="Q6FZE6"/>
<dbReference type="KEGG" id="bqu:BQ07990"/>
<dbReference type="eggNOG" id="COG0202">
    <property type="taxonomic scope" value="Bacteria"/>
</dbReference>
<dbReference type="HOGENOM" id="CLU_053084_0_0_5"/>
<dbReference type="OrthoDB" id="9805706at2"/>
<dbReference type="Proteomes" id="UP000000597">
    <property type="component" value="Chromosome"/>
</dbReference>
<dbReference type="GO" id="GO:0005737">
    <property type="term" value="C:cytoplasm"/>
    <property type="evidence" value="ECO:0007669"/>
    <property type="project" value="UniProtKB-ARBA"/>
</dbReference>
<dbReference type="GO" id="GO:0000428">
    <property type="term" value="C:DNA-directed RNA polymerase complex"/>
    <property type="evidence" value="ECO:0007669"/>
    <property type="project" value="UniProtKB-KW"/>
</dbReference>
<dbReference type="GO" id="GO:0003677">
    <property type="term" value="F:DNA binding"/>
    <property type="evidence" value="ECO:0007669"/>
    <property type="project" value="UniProtKB-UniRule"/>
</dbReference>
<dbReference type="GO" id="GO:0003899">
    <property type="term" value="F:DNA-directed RNA polymerase activity"/>
    <property type="evidence" value="ECO:0007669"/>
    <property type="project" value="UniProtKB-UniRule"/>
</dbReference>
<dbReference type="GO" id="GO:0046983">
    <property type="term" value="F:protein dimerization activity"/>
    <property type="evidence" value="ECO:0007669"/>
    <property type="project" value="InterPro"/>
</dbReference>
<dbReference type="GO" id="GO:0006351">
    <property type="term" value="P:DNA-templated transcription"/>
    <property type="evidence" value="ECO:0007669"/>
    <property type="project" value="UniProtKB-UniRule"/>
</dbReference>
<dbReference type="CDD" id="cd06928">
    <property type="entry name" value="RNAP_alpha_NTD"/>
    <property type="match status" value="1"/>
</dbReference>
<dbReference type="FunFam" id="1.10.150.20:FF:000001">
    <property type="entry name" value="DNA-directed RNA polymerase subunit alpha"/>
    <property type="match status" value="1"/>
</dbReference>
<dbReference type="FunFam" id="2.170.120.12:FF:000001">
    <property type="entry name" value="DNA-directed RNA polymerase subunit alpha"/>
    <property type="match status" value="1"/>
</dbReference>
<dbReference type="Gene3D" id="1.10.150.20">
    <property type="entry name" value="5' to 3' exonuclease, C-terminal subdomain"/>
    <property type="match status" value="1"/>
</dbReference>
<dbReference type="Gene3D" id="2.170.120.12">
    <property type="entry name" value="DNA-directed RNA polymerase, insert domain"/>
    <property type="match status" value="1"/>
</dbReference>
<dbReference type="Gene3D" id="3.30.1360.10">
    <property type="entry name" value="RNA polymerase, RBP11-like subunit"/>
    <property type="match status" value="1"/>
</dbReference>
<dbReference type="HAMAP" id="MF_00059">
    <property type="entry name" value="RNApol_bact_RpoA"/>
    <property type="match status" value="1"/>
</dbReference>
<dbReference type="InterPro" id="IPR011262">
    <property type="entry name" value="DNA-dir_RNA_pol_insert"/>
</dbReference>
<dbReference type="InterPro" id="IPR011263">
    <property type="entry name" value="DNA-dir_RNA_pol_RpoA/D/Rpb3"/>
</dbReference>
<dbReference type="InterPro" id="IPR011773">
    <property type="entry name" value="DNA-dir_RpoA"/>
</dbReference>
<dbReference type="InterPro" id="IPR036603">
    <property type="entry name" value="RBP11-like"/>
</dbReference>
<dbReference type="InterPro" id="IPR011260">
    <property type="entry name" value="RNAP_asu_C"/>
</dbReference>
<dbReference type="InterPro" id="IPR036643">
    <property type="entry name" value="RNApol_insert_sf"/>
</dbReference>
<dbReference type="NCBIfam" id="NF003513">
    <property type="entry name" value="PRK05182.1-2"/>
    <property type="match status" value="1"/>
</dbReference>
<dbReference type="NCBIfam" id="NF003519">
    <property type="entry name" value="PRK05182.2-5"/>
    <property type="match status" value="1"/>
</dbReference>
<dbReference type="NCBIfam" id="TIGR02027">
    <property type="entry name" value="rpoA"/>
    <property type="match status" value="1"/>
</dbReference>
<dbReference type="Pfam" id="PF01000">
    <property type="entry name" value="RNA_pol_A_bac"/>
    <property type="match status" value="1"/>
</dbReference>
<dbReference type="Pfam" id="PF03118">
    <property type="entry name" value="RNA_pol_A_CTD"/>
    <property type="match status" value="1"/>
</dbReference>
<dbReference type="Pfam" id="PF01193">
    <property type="entry name" value="RNA_pol_L"/>
    <property type="match status" value="1"/>
</dbReference>
<dbReference type="SMART" id="SM00662">
    <property type="entry name" value="RPOLD"/>
    <property type="match status" value="1"/>
</dbReference>
<dbReference type="SUPFAM" id="SSF47789">
    <property type="entry name" value="C-terminal domain of RNA polymerase alpha subunit"/>
    <property type="match status" value="1"/>
</dbReference>
<dbReference type="SUPFAM" id="SSF56553">
    <property type="entry name" value="Insert subdomain of RNA polymerase alpha subunit"/>
    <property type="match status" value="1"/>
</dbReference>
<dbReference type="SUPFAM" id="SSF55257">
    <property type="entry name" value="RBP11-like subunits of RNA polymerase"/>
    <property type="match status" value="1"/>
</dbReference>
<accession>Q6FZE6</accession>
<gene>
    <name evidence="1" type="primary">rpoA</name>
    <name type="ordered locus">BQ07990</name>
</gene>
<evidence type="ECO:0000255" key="1">
    <source>
        <dbReference type="HAMAP-Rule" id="MF_00059"/>
    </source>
</evidence>
<protein>
    <recommendedName>
        <fullName evidence="1">DNA-directed RNA polymerase subunit alpha</fullName>
        <shortName evidence="1">RNAP subunit alpha</shortName>
        <ecNumber evidence="1">2.7.7.6</ecNumber>
    </recommendedName>
    <alternativeName>
        <fullName evidence="1">RNA polymerase subunit alpha</fullName>
    </alternativeName>
    <alternativeName>
        <fullName evidence="1">Transcriptase subunit alpha</fullName>
    </alternativeName>
</protein>
<sequence length="337" mass="37651">MIQKNWQELIKPNKVEFCTHDNPNISSVIVEPLERGFGLTLGNALRRVLLSSLRGAAITAVQIDGVLHEFSSIPGVREDVTDIILNIKEIALRMQEEGPKRVVVCKEGPGVVRAGDINTVGDMEILNPEHVICTLDEGAEIRMEFIVNTGKGYIPSDRNCVDDGRIGLIPVDSLYSPIRKVSYKVENTREGQVLDYDKLTLTIETNGAVNGEDAVAFAARILQDQLSLFVNFEEPQKEIVDESDSELTFNPALLKKVDELELSVRSANCLKNDNIVYIGDLIQKTESEMLRTPNFGRKSLNEIKEVLACMGLHLGMEIPTWPPENIDDLAKRYEDQY</sequence>
<proteinExistence type="inferred from homology"/>
<organism>
    <name type="scientific">Bartonella quintana (strain Toulouse)</name>
    <name type="common">Rochalimaea quintana</name>
    <dbReference type="NCBI Taxonomy" id="283165"/>
    <lineage>
        <taxon>Bacteria</taxon>
        <taxon>Pseudomonadati</taxon>
        <taxon>Pseudomonadota</taxon>
        <taxon>Alphaproteobacteria</taxon>
        <taxon>Hyphomicrobiales</taxon>
        <taxon>Bartonellaceae</taxon>
        <taxon>Bartonella</taxon>
    </lineage>
</organism>
<reference key="1">
    <citation type="journal article" date="2004" name="Proc. Natl. Acad. Sci. U.S.A.">
        <title>The louse-borne human pathogen Bartonella quintana is a genomic derivative of the zoonotic agent Bartonella henselae.</title>
        <authorList>
            <person name="Alsmark U.C.M."/>
            <person name="Frank A.C."/>
            <person name="Karlberg E.O."/>
            <person name="Legault B.-A."/>
            <person name="Ardell D.H."/>
            <person name="Canbaeck B."/>
            <person name="Eriksson A.-S."/>
            <person name="Naeslund A.K."/>
            <person name="Handley S.A."/>
            <person name="Huvet M."/>
            <person name="La Scola B."/>
            <person name="Holmberg M."/>
            <person name="Andersson S.G.E."/>
        </authorList>
    </citation>
    <scope>NUCLEOTIDE SEQUENCE [LARGE SCALE GENOMIC DNA]</scope>
    <source>
        <strain>Toulouse</strain>
    </source>
</reference>
<keyword id="KW-0240">DNA-directed RNA polymerase</keyword>
<keyword id="KW-0548">Nucleotidyltransferase</keyword>
<keyword id="KW-0804">Transcription</keyword>
<keyword id="KW-0808">Transferase</keyword>
<feature type="chain" id="PRO_0000175268" description="DNA-directed RNA polymerase subunit alpha">
    <location>
        <begin position="1"/>
        <end position="337"/>
    </location>
</feature>
<feature type="region of interest" description="Alpha N-terminal domain (alpha-NTD)" evidence="1">
    <location>
        <begin position="1"/>
        <end position="233"/>
    </location>
</feature>
<feature type="region of interest" description="Alpha C-terminal domain (alpha-CTD)" evidence="1">
    <location>
        <begin position="249"/>
        <end position="337"/>
    </location>
</feature>
<comment type="function">
    <text evidence="1">DNA-dependent RNA polymerase catalyzes the transcription of DNA into RNA using the four ribonucleoside triphosphates as substrates.</text>
</comment>
<comment type="catalytic activity">
    <reaction evidence="1">
        <text>RNA(n) + a ribonucleoside 5'-triphosphate = RNA(n+1) + diphosphate</text>
        <dbReference type="Rhea" id="RHEA:21248"/>
        <dbReference type="Rhea" id="RHEA-COMP:14527"/>
        <dbReference type="Rhea" id="RHEA-COMP:17342"/>
        <dbReference type="ChEBI" id="CHEBI:33019"/>
        <dbReference type="ChEBI" id="CHEBI:61557"/>
        <dbReference type="ChEBI" id="CHEBI:140395"/>
        <dbReference type="EC" id="2.7.7.6"/>
    </reaction>
</comment>
<comment type="subunit">
    <text evidence="1">Homodimer. The RNAP catalytic core consists of 2 alpha, 1 beta, 1 beta' and 1 omega subunit. When a sigma factor is associated with the core the holoenzyme is formed, which can initiate transcription.</text>
</comment>
<comment type="domain">
    <text evidence="1">The N-terminal domain is essential for RNAP assembly and basal transcription, whereas the C-terminal domain is involved in interaction with transcriptional regulators and with upstream promoter elements.</text>
</comment>
<comment type="similarity">
    <text evidence="1">Belongs to the RNA polymerase alpha chain family.</text>
</comment>
<name>RPOA_BARQU</name>